<protein>
    <recommendedName>
        <fullName evidence="1">Phosphoribosylaminoimidazole-succinocarboxamide synthase</fullName>
        <ecNumber evidence="1">6.3.2.6</ecNumber>
    </recommendedName>
    <alternativeName>
        <fullName evidence="1">SAICAR synthetase</fullName>
    </alternativeName>
</protein>
<proteinExistence type="inferred from homology"/>
<reference key="1">
    <citation type="journal article" date="2003" name="Lancet">
        <title>Sequencing and analysis of the genome of the Whipple's disease bacterium Tropheryma whipplei.</title>
        <authorList>
            <person name="Bentley S.D."/>
            <person name="Maiwald M."/>
            <person name="Murphy L.D."/>
            <person name="Pallen M.J."/>
            <person name="Yeats C.A."/>
            <person name="Dover L.G."/>
            <person name="Norbertczak H.T."/>
            <person name="Besra G.S."/>
            <person name="Quail M.A."/>
            <person name="Harris D.E."/>
            <person name="von Herbay A."/>
            <person name="Goble A."/>
            <person name="Rutter S."/>
            <person name="Squares R."/>
            <person name="Squares S."/>
            <person name="Barrell B.G."/>
            <person name="Parkhill J."/>
            <person name="Relman D.A."/>
        </authorList>
    </citation>
    <scope>NUCLEOTIDE SEQUENCE [LARGE SCALE GENOMIC DNA]</scope>
    <source>
        <strain>TW08/27</strain>
    </source>
</reference>
<evidence type="ECO:0000255" key="1">
    <source>
        <dbReference type="HAMAP-Rule" id="MF_00137"/>
    </source>
</evidence>
<feature type="chain" id="PRO_0000100893" description="Phosphoribosylaminoimidazole-succinocarboxamide synthase">
    <location>
        <begin position="1"/>
        <end position="305"/>
    </location>
</feature>
<dbReference type="EC" id="6.3.2.6" evidence="1"/>
<dbReference type="EMBL" id="BX251410">
    <property type="protein sequence ID" value="CAD66801.1"/>
    <property type="molecule type" value="Genomic_DNA"/>
</dbReference>
<dbReference type="RefSeq" id="WP_011096082.1">
    <property type="nucleotide sequence ID" value="NC_004551.1"/>
</dbReference>
<dbReference type="SMR" id="Q83IB9"/>
<dbReference type="GeneID" id="67387892"/>
<dbReference type="KEGG" id="tws:TW119"/>
<dbReference type="HOGENOM" id="CLU_045637_0_2_11"/>
<dbReference type="UniPathway" id="UPA00074">
    <property type="reaction ID" value="UER00131"/>
</dbReference>
<dbReference type="GO" id="GO:0005737">
    <property type="term" value="C:cytoplasm"/>
    <property type="evidence" value="ECO:0007669"/>
    <property type="project" value="TreeGrafter"/>
</dbReference>
<dbReference type="GO" id="GO:0005524">
    <property type="term" value="F:ATP binding"/>
    <property type="evidence" value="ECO:0007669"/>
    <property type="project" value="UniProtKB-KW"/>
</dbReference>
<dbReference type="GO" id="GO:0004639">
    <property type="term" value="F:phosphoribosylaminoimidazolesuccinocarboxamide synthase activity"/>
    <property type="evidence" value="ECO:0007669"/>
    <property type="project" value="UniProtKB-UniRule"/>
</dbReference>
<dbReference type="GO" id="GO:0006189">
    <property type="term" value="P:'de novo' IMP biosynthetic process"/>
    <property type="evidence" value="ECO:0007669"/>
    <property type="project" value="UniProtKB-UniRule"/>
</dbReference>
<dbReference type="CDD" id="cd01414">
    <property type="entry name" value="SAICAR_synt_Sc"/>
    <property type="match status" value="1"/>
</dbReference>
<dbReference type="Gene3D" id="3.30.470.20">
    <property type="entry name" value="ATP-grasp fold, B domain"/>
    <property type="match status" value="1"/>
</dbReference>
<dbReference type="Gene3D" id="3.30.200.20">
    <property type="entry name" value="Phosphorylase Kinase, domain 1"/>
    <property type="match status" value="1"/>
</dbReference>
<dbReference type="HAMAP" id="MF_00137">
    <property type="entry name" value="SAICAR_synth"/>
    <property type="match status" value="1"/>
</dbReference>
<dbReference type="InterPro" id="IPR028923">
    <property type="entry name" value="SAICAR_synt/ADE2_N"/>
</dbReference>
<dbReference type="InterPro" id="IPR018236">
    <property type="entry name" value="SAICAR_synthetase_CS"/>
</dbReference>
<dbReference type="NCBIfam" id="NF010568">
    <property type="entry name" value="PRK13961.1"/>
    <property type="match status" value="1"/>
</dbReference>
<dbReference type="PANTHER" id="PTHR43700">
    <property type="entry name" value="PHOSPHORIBOSYLAMINOIMIDAZOLE-SUCCINOCARBOXAMIDE SYNTHASE"/>
    <property type="match status" value="1"/>
</dbReference>
<dbReference type="PANTHER" id="PTHR43700:SF1">
    <property type="entry name" value="PHOSPHORIBOSYLAMINOIMIDAZOLE-SUCCINOCARBOXAMIDE SYNTHASE"/>
    <property type="match status" value="1"/>
</dbReference>
<dbReference type="Pfam" id="PF01259">
    <property type="entry name" value="SAICAR_synt"/>
    <property type="match status" value="1"/>
</dbReference>
<dbReference type="SUPFAM" id="SSF56104">
    <property type="entry name" value="SAICAR synthase-like"/>
    <property type="match status" value="1"/>
</dbReference>
<dbReference type="PROSITE" id="PS01057">
    <property type="entry name" value="SAICAR_SYNTHETASE_1"/>
    <property type="match status" value="1"/>
</dbReference>
<dbReference type="PROSITE" id="PS01058">
    <property type="entry name" value="SAICAR_SYNTHETASE_2"/>
    <property type="match status" value="1"/>
</dbReference>
<comment type="catalytic activity">
    <reaction evidence="1">
        <text>5-amino-1-(5-phospho-D-ribosyl)imidazole-4-carboxylate + L-aspartate + ATP = (2S)-2-[5-amino-1-(5-phospho-beta-D-ribosyl)imidazole-4-carboxamido]succinate + ADP + phosphate + 2 H(+)</text>
        <dbReference type="Rhea" id="RHEA:22628"/>
        <dbReference type="ChEBI" id="CHEBI:15378"/>
        <dbReference type="ChEBI" id="CHEBI:29991"/>
        <dbReference type="ChEBI" id="CHEBI:30616"/>
        <dbReference type="ChEBI" id="CHEBI:43474"/>
        <dbReference type="ChEBI" id="CHEBI:58443"/>
        <dbReference type="ChEBI" id="CHEBI:77657"/>
        <dbReference type="ChEBI" id="CHEBI:456216"/>
        <dbReference type="EC" id="6.3.2.6"/>
    </reaction>
</comment>
<comment type="pathway">
    <text evidence="1">Purine metabolism; IMP biosynthesis via de novo pathway; 5-amino-1-(5-phospho-D-ribosyl)imidazole-4-carboxamide from 5-amino-1-(5-phospho-D-ribosyl)imidazole-4-carboxylate: step 1/2.</text>
</comment>
<comment type="similarity">
    <text evidence="1">Belongs to the SAICAR synthetase family.</text>
</comment>
<name>PUR7_TROW8</name>
<accession>Q83IB9</accession>
<organism>
    <name type="scientific">Tropheryma whipplei (strain TW08/27)</name>
    <name type="common">Whipple's bacillus</name>
    <dbReference type="NCBI Taxonomy" id="218496"/>
    <lineage>
        <taxon>Bacteria</taxon>
        <taxon>Bacillati</taxon>
        <taxon>Actinomycetota</taxon>
        <taxon>Actinomycetes</taxon>
        <taxon>Micrococcales</taxon>
        <taxon>Tropherymataceae</taxon>
        <taxon>Tropheryma</taxon>
    </lineage>
</organism>
<sequence>MTRKLEIPESRDLPDWSHIGGGKVRELYVHRQYKNILLMFASNRVSAFDFVLEPEIPEKGRMLTQMSNWWFRKLPAENHLLENYDQELYRDLASHIPSHILERSTICRKMDIIPFEFVIRGYLTGSAWADYLENNTVYGIKLKGKFRQGDRLPGPIFTPTTKSRTKDTPVRYEDLVNAIGLSHAQQLREMCTDYYTTAEQIARNKGLIIADAKFEFGIAEGKAYLADELLTADSARYWDINSWGQFDLPIERRLDSFDKQAVRDWVKCNSGKNITPQNITPLRLPQELIQTVYKKYKTLLAKLTG</sequence>
<gene>
    <name evidence="1" type="primary">purC</name>
    <name type="ordered locus">TW119</name>
</gene>
<keyword id="KW-0067">ATP-binding</keyword>
<keyword id="KW-0436">Ligase</keyword>
<keyword id="KW-0547">Nucleotide-binding</keyword>
<keyword id="KW-0658">Purine biosynthesis</keyword>